<name>MURA_BORGP</name>
<gene>
    <name evidence="1" type="primary">murA</name>
    <name type="ordered locus">BG0484</name>
</gene>
<accession>Q661E8</accession>
<organism>
    <name type="scientific">Borrelia garinii subsp. bavariensis (strain ATCC BAA-2496 / DSM 23469 / PBi)</name>
    <name type="common">Borreliella bavariensis</name>
    <dbReference type="NCBI Taxonomy" id="290434"/>
    <lineage>
        <taxon>Bacteria</taxon>
        <taxon>Pseudomonadati</taxon>
        <taxon>Spirochaetota</taxon>
        <taxon>Spirochaetia</taxon>
        <taxon>Spirochaetales</taxon>
        <taxon>Borreliaceae</taxon>
        <taxon>Borreliella</taxon>
    </lineage>
</organism>
<keyword id="KW-0131">Cell cycle</keyword>
<keyword id="KW-0132">Cell division</keyword>
<keyword id="KW-0133">Cell shape</keyword>
<keyword id="KW-0961">Cell wall biogenesis/degradation</keyword>
<keyword id="KW-0963">Cytoplasm</keyword>
<keyword id="KW-0573">Peptidoglycan synthesis</keyword>
<keyword id="KW-0808">Transferase</keyword>
<feature type="chain" id="PRO_0000231177" description="UDP-N-acetylglucosamine 1-carboxyvinyltransferase">
    <location>
        <begin position="1"/>
        <end position="427"/>
    </location>
</feature>
<feature type="active site" description="Proton donor" evidence="1">
    <location>
        <position position="116"/>
    </location>
</feature>
<feature type="binding site" evidence="1">
    <location>
        <begin position="22"/>
        <end position="23"/>
    </location>
    <ligand>
        <name>phosphoenolpyruvate</name>
        <dbReference type="ChEBI" id="CHEBI:58702"/>
    </ligand>
</feature>
<feature type="binding site" evidence="1">
    <location>
        <position position="92"/>
    </location>
    <ligand>
        <name>UDP-N-acetyl-alpha-D-glucosamine</name>
        <dbReference type="ChEBI" id="CHEBI:57705"/>
    </ligand>
</feature>
<feature type="binding site" evidence="1">
    <location>
        <position position="312"/>
    </location>
    <ligand>
        <name>UDP-N-acetyl-alpha-D-glucosamine</name>
        <dbReference type="ChEBI" id="CHEBI:57705"/>
    </ligand>
</feature>
<feature type="binding site" evidence="1">
    <location>
        <position position="334"/>
    </location>
    <ligand>
        <name>UDP-N-acetyl-alpha-D-glucosamine</name>
        <dbReference type="ChEBI" id="CHEBI:57705"/>
    </ligand>
</feature>
<proteinExistence type="inferred from homology"/>
<protein>
    <recommendedName>
        <fullName evidence="1">UDP-N-acetylglucosamine 1-carboxyvinyltransferase</fullName>
        <ecNumber evidence="1">2.5.1.7</ecNumber>
    </recommendedName>
    <alternativeName>
        <fullName evidence="1">Enoylpyruvate transferase</fullName>
    </alternativeName>
    <alternativeName>
        <fullName evidence="1">UDP-N-acetylglucosamine enolpyruvyl transferase</fullName>
        <shortName evidence="1">EPT</shortName>
    </alternativeName>
</protein>
<sequence length="427" mass="46546">MYSYIVEGGFKIGGQITASGNKNSALPCILAALLTNEDVILENIPNINDVKVVLDILSDIGADIVREGNALKIKVSNIVKTEIDSSFTDLIRASILLLGPFVSRFGEIDMALPGGDVIGKRRLDTHFYGLSKLGAKLINKDGRIVLKAKKLVGAEMFLDEASVTATENIIMASVLAEGNTVIMNAACEPHVQDLCNMLNSMGANILGIGSNVLEIKGVKKLRGTTFRIGADFMQVGSLISLAALTGGELEIKKADPQHFRLIRHIYSRLGINFEYDKENVYVRDKQELKVKLDFGGHIPKIDDGPWPAFPTDLMSIIIVTATQVEGTVLVFEKMFESRMFFVDKLIKMGAQIVLCDPHRVVVTGKSPLKGNVLSSPDVRAGMSLLIAAFVAEGRSEIQNVYQIERGYEDVANKLINLGAKIKKVKSQ</sequence>
<reference key="1">
    <citation type="journal article" date="2004" name="Nucleic Acids Res.">
        <title>Comparative analysis of the Borrelia garinii genome.</title>
        <authorList>
            <person name="Gloeckner G."/>
            <person name="Lehmann R."/>
            <person name="Romualdi A."/>
            <person name="Pradella S."/>
            <person name="Schulte-Spechtel U."/>
            <person name="Schilhabel M."/>
            <person name="Wilske B."/>
            <person name="Suehnel J."/>
            <person name="Platzer M."/>
        </authorList>
    </citation>
    <scope>NUCLEOTIDE SEQUENCE [LARGE SCALE GENOMIC DNA]</scope>
    <source>
        <strain>ATCC BAA-2496 / DSM 23469 / PBi</strain>
    </source>
</reference>
<comment type="function">
    <text evidence="1">Cell wall formation. Adds enolpyruvyl to UDP-N-acetylglucosamine.</text>
</comment>
<comment type="catalytic activity">
    <reaction evidence="1">
        <text>phosphoenolpyruvate + UDP-N-acetyl-alpha-D-glucosamine = UDP-N-acetyl-3-O-(1-carboxyvinyl)-alpha-D-glucosamine + phosphate</text>
        <dbReference type="Rhea" id="RHEA:18681"/>
        <dbReference type="ChEBI" id="CHEBI:43474"/>
        <dbReference type="ChEBI" id="CHEBI:57705"/>
        <dbReference type="ChEBI" id="CHEBI:58702"/>
        <dbReference type="ChEBI" id="CHEBI:68483"/>
        <dbReference type="EC" id="2.5.1.7"/>
    </reaction>
</comment>
<comment type="pathway">
    <text evidence="1">Cell wall biogenesis; peptidoglycan biosynthesis.</text>
</comment>
<comment type="subcellular location">
    <subcellularLocation>
        <location evidence="1">Cytoplasm</location>
    </subcellularLocation>
</comment>
<comment type="similarity">
    <text evidence="1">Belongs to the EPSP synthase family. MurA subfamily.</text>
</comment>
<evidence type="ECO:0000255" key="1">
    <source>
        <dbReference type="HAMAP-Rule" id="MF_00111"/>
    </source>
</evidence>
<dbReference type="EC" id="2.5.1.7" evidence="1"/>
<dbReference type="EMBL" id="CP000013">
    <property type="protein sequence ID" value="AAU07323.1"/>
    <property type="molecule type" value="Genomic_DNA"/>
</dbReference>
<dbReference type="RefSeq" id="WP_011193793.1">
    <property type="nucleotide sequence ID" value="NZ_CP028872.1"/>
</dbReference>
<dbReference type="SMR" id="Q661E8"/>
<dbReference type="GeneID" id="45161268"/>
<dbReference type="KEGG" id="bga:BG0484"/>
<dbReference type="eggNOG" id="COG0766">
    <property type="taxonomic scope" value="Bacteria"/>
</dbReference>
<dbReference type="HOGENOM" id="CLU_027387_0_1_12"/>
<dbReference type="OrthoDB" id="9803760at2"/>
<dbReference type="UniPathway" id="UPA00219"/>
<dbReference type="Proteomes" id="UP000002276">
    <property type="component" value="Chromosome"/>
</dbReference>
<dbReference type="GO" id="GO:0005737">
    <property type="term" value="C:cytoplasm"/>
    <property type="evidence" value="ECO:0007669"/>
    <property type="project" value="UniProtKB-SubCell"/>
</dbReference>
<dbReference type="GO" id="GO:0008760">
    <property type="term" value="F:UDP-N-acetylglucosamine 1-carboxyvinyltransferase activity"/>
    <property type="evidence" value="ECO:0007669"/>
    <property type="project" value="UniProtKB-UniRule"/>
</dbReference>
<dbReference type="GO" id="GO:0051301">
    <property type="term" value="P:cell division"/>
    <property type="evidence" value="ECO:0007669"/>
    <property type="project" value="UniProtKB-KW"/>
</dbReference>
<dbReference type="GO" id="GO:0071555">
    <property type="term" value="P:cell wall organization"/>
    <property type="evidence" value="ECO:0007669"/>
    <property type="project" value="UniProtKB-KW"/>
</dbReference>
<dbReference type="GO" id="GO:0009252">
    <property type="term" value="P:peptidoglycan biosynthetic process"/>
    <property type="evidence" value="ECO:0007669"/>
    <property type="project" value="UniProtKB-UniRule"/>
</dbReference>
<dbReference type="GO" id="GO:0008360">
    <property type="term" value="P:regulation of cell shape"/>
    <property type="evidence" value="ECO:0007669"/>
    <property type="project" value="UniProtKB-KW"/>
</dbReference>
<dbReference type="GO" id="GO:0019277">
    <property type="term" value="P:UDP-N-acetylgalactosamine biosynthetic process"/>
    <property type="evidence" value="ECO:0007669"/>
    <property type="project" value="InterPro"/>
</dbReference>
<dbReference type="CDD" id="cd01555">
    <property type="entry name" value="UdpNAET"/>
    <property type="match status" value="1"/>
</dbReference>
<dbReference type="Gene3D" id="3.65.10.10">
    <property type="entry name" value="Enolpyruvate transferase domain"/>
    <property type="match status" value="2"/>
</dbReference>
<dbReference type="HAMAP" id="MF_00111">
    <property type="entry name" value="MurA"/>
    <property type="match status" value="1"/>
</dbReference>
<dbReference type="InterPro" id="IPR001986">
    <property type="entry name" value="Enolpyruvate_Tfrase_dom"/>
</dbReference>
<dbReference type="InterPro" id="IPR036968">
    <property type="entry name" value="Enolpyruvate_Tfrase_sf"/>
</dbReference>
<dbReference type="InterPro" id="IPR050068">
    <property type="entry name" value="MurA_subfamily"/>
</dbReference>
<dbReference type="InterPro" id="IPR013792">
    <property type="entry name" value="RNA3'P_cycl/enolpyr_Trfase_a/b"/>
</dbReference>
<dbReference type="InterPro" id="IPR005750">
    <property type="entry name" value="UDP_GlcNAc_COvinyl_MurA"/>
</dbReference>
<dbReference type="NCBIfam" id="TIGR01072">
    <property type="entry name" value="murA"/>
    <property type="match status" value="1"/>
</dbReference>
<dbReference type="NCBIfam" id="NF006873">
    <property type="entry name" value="PRK09369.1"/>
    <property type="match status" value="1"/>
</dbReference>
<dbReference type="PANTHER" id="PTHR43783">
    <property type="entry name" value="UDP-N-ACETYLGLUCOSAMINE 1-CARBOXYVINYLTRANSFERASE"/>
    <property type="match status" value="1"/>
</dbReference>
<dbReference type="PANTHER" id="PTHR43783:SF1">
    <property type="entry name" value="UDP-N-ACETYLGLUCOSAMINE 1-CARBOXYVINYLTRANSFERASE"/>
    <property type="match status" value="1"/>
</dbReference>
<dbReference type="Pfam" id="PF00275">
    <property type="entry name" value="EPSP_synthase"/>
    <property type="match status" value="1"/>
</dbReference>
<dbReference type="SUPFAM" id="SSF55205">
    <property type="entry name" value="EPT/RTPC-like"/>
    <property type="match status" value="1"/>
</dbReference>